<sequence>NDWRNAMYPVVPGHE</sequence>
<accession>P80614</accession>
<feature type="chain" id="PRO_0000055506" description="Unknown protein from spot 159 of 2D-PAGE of etiolated coleoptile">
    <location>
        <begin position="1" status="less than"/>
        <end position="15" status="greater than"/>
    </location>
</feature>
<feature type="non-terminal residue">
    <location>
        <position position="1"/>
    </location>
</feature>
<feature type="non-terminal residue">
    <location>
        <position position="15"/>
    </location>
</feature>
<comment type="miscellaneous">
    <text>On the 2D-gel the determined pI of this unknown protein is: 6.4, its MW is: 38.8 kDa.</text>
</comment>
<comment type="similarity">
    <text evidence="1">Belongs to the zinc-containing alcohol dehydrogenase family.</text>
</comment>
<reference key="1">
    <citation type="journal article" date="1996" name="Theor. Appl. Genet.">
        <title>The maize two dimensional gel protein database: towards an integrated genome analysis program.</title>
        <authorList>
            <person name="Touzet P."/>
            <person name="Riccardi F."/>
            <person name="Morin C."/>
            <person name="Damerval C."/>
            <person name="Huet J.-C."/>
            <person name="Pernollet J.-C."/>
            <person name="Zivy M."/>
            <person name="de Vienne D."/>
        </authorList>
        <dbReference type="AGRICOLA" id="IND20551642"/>
    </citation>
    <scope>PROTEIN SEQUENCE</scope>
    <source>
        <tissue>Coleoptile</tissue>
    </source>
</reference>
<organism>
    <name type="scientific">Zea mays</name>
    <name type="common">Maize</name>
    <dbReference type="NCBI Taxonomy" id="4577"/>
    <lineage>
        <taxon>Eukaryota</taxon>
        <taxon>Viridiplantae</taxon>
        <taxon>Streptophyta</taxon>
        <taxon>Embryophyta</taxon>
        <taxon>Tracheophyta</taxon>
        <taxon>Spermatophyta</taxon>
        <taxon>Magnoliopsida</taxon>
        <taxon>Liliopsida</taxon>
        <taxon>Poales</taxon>
        <taxon>Poaceae</taxon>
        <taxon>PACMAD clade</taxon>
        <taxon>Panicoideae</taxon>
        <taxon>Andropogonodae</taxon>
        <taxon>Andropogoneae</taxon>
        <taxon>Tripsacinae</taxon>
        <taxon>Zea</taxon>
    </lineage>
</organism>
<proteinExistence type="evidence at protein level"/>
<evidence type="ECO:0000305" key="1"/>
<keyword id="KW-0903">Direct protein sequencing</keyword>
<keyword id="KW-1185">Reference proteome</keyword>
<dbReference type="PaxDb" id="4577-GRMZM2G700188_P05"/>
<dbReference type="MaizeGDB" id="123934"/>
<dbReference type="eggNOG" id="KOG0023">
    <property type="taxonomic scope" value="Eukaryota"/>
</dbReference>
<dbReference type="InParanoid" id="P80614"/>
<dbReference type="Proteomes" id="UP000007305">
    <property type="component" value="Unplaced"/>
</dbReference>
<name>UC08_MAIZE</name>
<protein>
    <recommendedName>
        <fullName>Unknown protein from spot 159 of 2D-PAGE of etiolated coleoptile</fullName>
    </recommendedName>
</protein>